<name>FLGI_PSEA6</name>
<evidence type="ECO:0000255" key="1">
    <source>
        <dbReference type="HAMAP-Rule" id="MF_00416"/>
    </source>
</evidence>
<sequence length="370" mass="38818">MKLLLFILMISSIIIVPVGQAQRIKDLASVQGVRSNQLVGYGLVVGLPGTGEQSPFTEQSFRTMLSNFGISLDSSLKPKIKNVAAVAVHAELPPFLKPGQTIDVTVSSVGEAASLRGGTLLQTFLKGLDGKVYAVAQGSMVVSGFGAEGADGSKIVANTPTVGRIANGALIERAVPSGFMQNDFLTLNLNYPDFSTAKILADTINQRLGADPDKGYVIATPIDAASVRVSAPRDVGQRVGFLATLENFEFMPAKAPARIVINSRTGTIVIGQDVRLLPAAITHGGLTVTISENQQVTQPNPLGQGDTVVTDQSIIDVNLDDTRMFKFDPGVTLDQLVRAVNEVGAAPGDLMAILEALSEAGALQGELVVI</sequence>
<proteinExistence type="inferred from homology"/>
<gene>
    <name evidence="1" type="primary">flgI</name>
    <name type="ordered locus">Patl_3093</name>
</gene>
<organism>
    <name type="scientific">Pseudoalteromonas atlantica (strain T6c / ATCC BAA-1087)</name>
    <dbReference type="NCBI Taxonomy" id="3042615"/>
    <lineage>
        <taxon>Bacteria</taxon>
        <taxon>Pseudomonadati</taxon>
        <taxon>Pseudomonadota</taxon>
        <taxon>Gammaproteobacteria</taxon>
        <taxon>Alteromonadales</taxon>
        <taxon>Alteromonadaceae</taxon>
        <taxon>Paraglaciecola</taxon>
    </lineage>
</organism>
<protein>
    <recommendedName>
        <fullName evidence="1">Flagellar P-ring protein</fullName>
    </recommendedName>
    <alternativeName>
        <fullName evidence="1">Basal body P-ring protein</fullName>
    </alternativeName>
</protein>
<feature type="signal peptide" evidence="1">
    <location>
        <begin position="1"/>
        <end position="21"/>
    </location>
</feature>
<feature type="chain" id="PRO_5000125661" description="Flagellar P-ring protein">
    <location>
        <begin position="22"/>
        <end position="370"/>
    </location>
</feature>
<comment type="function">
    <text evidence="1">Assembles around the rod to form the L-ring and probably protects the motor/basal body from shearing forces during rotation.</text>
</comment>
<comment type="subunit">
    <text evidence="1">The basal body constitutes a major portion of the flagellar organelle and consists of four rings (L,P,S, and M) mounted on a central rod.</text>
</comment>
<comment type="subcellular location">
    <subcellularLocation>
        <location evidence="1">Periplasm</location>
    </subcellularLocation>
    <subcellularLocation>
        <location evidence="1">Bacterial flagellum basal body</location>
    </subcellularLocation>
</comment>
<comment type="similarity">
    <text evidence="1">Belongs to the FlgI family.</text>
</comment>
<accession>Q15R89</accession>
<keyword id="KW-0975">Bacterial flagellum</keyword>
<keyword id="KW-0574">Periplasm</keyword>
<keyword id="KW-0732">Signal</keyword>
<dbReference type="EMBL" id="CP000388">
    <property type="protein sequence ID" value="ABG41599.1"/>
    <property type="molecule type" value="Genomic_DNA"/>
</dbReference>
<dbReference type="RefSeq" id="WP_011575838.1">
    <property type="nucleotide sequence ID" value="NC_008228.1"/>
</dbReference>
<dbReference type="SMR" id="Q15R89"/>
<dbReference type="STRING" id="342610.Patl_3093"/>
<dbReference type="KEGG" id="pat:Patl_3093"/>
<dbReference type="eggNOG" id="COG1706">
    <property type="taxonomic scope" value="Bacteria"/>
</dbReference>
<dbReference type="HOGENOM" id="CLU_045235_1_0_6"/>
<dbReference type="OrthoDB" id="9786431at2"/>
<dbReference type="Proteomes" id="UP000001981">
    <property type="component" value="Chromosome"/>
</dbReference>
<dbReference type="GO" id="GO:0009428">
    <property type="term" value="C:bacterial-type flagellum basal body, distal rod, P ring"/>
    <property type="evidence" value="ECO:0007669"/>
    <property type="project" value="InterPro"/>
</dbReference>
<dbReference type="GO" id="GO:0030288">
    <property type="term" value="C:outer membrane-bounded periplasmic space"/>
    <property type="evidence" value="ECO:0007669"/>
    <property type="project" value="InterPro"/>
</dbReference>
<dbReference type="GO" id="GO:0005198">
    <property type="term" value="F:structural molecule activity"/>
    <property type="evidence" value="ECO:0007669"/>
    <property type="project" value="InterPro"/>
</dbReference>
<dbReference type="GO" id="GO:0071973">
    <property type="term" value="P:bacterial-type flagellum-dependent cell motility"/>
    <property type="evidence" value="ECO:0007669"/>
    <property type="project" value="InterPro"/>
</dbReference>
<dbReference type="HAMAP" id="MF_00416">
    <property type="entry name" value="FlgI"/>
    <property type="match status" value="1"/>
</dbReference>
<dbReference type="InterPro" id="IPR001782">
    <property type="entry name" value="Flag_FlgI"/>
</dbReference>
<dbReference type="NCBIfam" id="NF003676">
    <property type="entry name" value="PRK05303.1"/>
    <property type="match status" value="1"/>
</dbReference>
<dbReference type="PANTHER" id="PTHR30381">
    <property type="entry name" value="FLAGELLAR P-RING PERIPLASMIC PROTEIN FLGI"/>
    <property type="match status" value="1"/>
</dbReference>
<dbReference type="PANTHER" id="PTHR30381:SF0">
    <property type="entry name" value="FLAGELLAR P-RING PROTEIN"/>
    <property type="match status" value="1"/>
</dbReference>
<dbReference type="Pfam" id="PF02119">
    <property type="entry name" value="FlgI"/>
    <property type="match status" value="1"/>
</dbReference>
<dbReference type="PRINTS" id="PR01010">
    <property type="entry name" value="FLGPRINGFLGI"/>
</dbReference>
<reference key="1">
    <citation type="submission" date="2006-06" db="EMBL/GenBank/DDBJ databases">
        <title>Complete sequence of Pseudoalteromonas atlantica T6c.</title>
        <authorList>
            <consortium name="US DOE Joint Genome Institute"/>
            <person name="Copeland A."/>
            <person name="Lucas S."/>
            <person name="Lapidus A."/>
            <person name="Barry K."/>
            <person name="Detter J.C."/>
            <person name="Glavina del Rio T."/>
            <person name="Hammon N."/>
            <person name="Israni S."/>
            <person name="Dalin E."/>
            <person name="Tice H."/>
            <person name="Pitluck S."/>
            <person name="Saunders E."/>
            <person name="Brettin T."/>
            <person name="Bruce D."/>
            <person name="Han C."/>
            <person name="Tapia R."/>
            <person name="Gilna P."/>
            <person name="Schmutz J."/>
            <person name="Larimer F."/>
            <person name="Land M."/>
            <person name="Hauser L."/>
            <person name="Kyrpides N."/>
            <person name="Kim E."/>
            <person name="Karls A.C."/>
            <person name="Bartlett D."/>
            <person name="Higgins B.P."/>
            <person name="Richardson P."/>
        </authorList>
    </citation>
    <scope>NUCLEOTIDE SEQUENCE [LARGE SCALE GENOMIC DNA]</scope>
    <source>
        <strain>T6c / ATCC BAA-1087</strain>
    </source>
</reference>